<proteinExistence type="inferred from homology"/>
<organism>
    <name type="scientific">Xanthomonas axonopodis pv. citri (strain 306)</name>
    <dbReference type="NCBI Taxonomy" id="190486"/>
    <lineage>
        <taxon>Bacteria</taxon>
        <taxon>Pseudomonadati</taxon>
        <taxon>Pseudomonadota</taxon>
        <taxon>Gammaproteobacteria</taxon>
        <taxon>Lysobacterales</taxon>
        <taxon>Lysobacteraceae</taxon>
        <taxon>Xanthomonas</taxon>
    </lineage>
</organism>
<keyword id="KW-0474">Menaquinone biosynthesis</keyword>
<keyword id="KW-0489">Methyltransferase</keyword>
<keyword id="KW-0949">S-adenosyl-L-methionine</keyword>
<keyword id="KW-0808">Transferase</keyword>
<keyword id="KW-0831">Ubiquinone biosynthesis</keyword>
<evidence type="ECO:0000255" key="1">
    <source>
        <dbReference type="HAMAP-Rule" id="MF_01813"/>
    </source>
</evidence>
<dbReference type="EC" id="2.1.1.163" evidence="1"/>
<dbReference type="EC" id="2.1.1.201" evidence="1"/>
<dbReference type="EMBL" id="AE008923">
    <property type="protein sequence ID" value="AAM35532.1"/>
    <property type="molecule type" value="Genomic_DNA"/>
</dbReference>
<dbReference type="RefSeq" id="WP_011050451.1">
    <property type="nucleotide sequence ID" value="NC_003919.1"/>
</dbReference>
<dbReference type="SMR" id="Q8PPP2"/>
<dbReference type="GeneID" id="66909841"/>
<dbReference type="KEGG" id="xac:XAC0643"/>
<dbReference type="eggNOG" id="COG2226">
    <property type="taxonomic scope" value="Bacteria"/>
</dbReference>
<dbReference type="HOGENOM" id="CLU_037990_0_0_6"/>
<dbReference type="UniPathway" id="UPA00079">
    <property type="reaction ID" value="UER00169"/>
</dbReference>
<dbReference type="UniPathway" id="UPA00232"/>
<dbReference type="Proteomes" id="UP000000576">
    <property type="component" value="Chromosome"/>
</dbReference>
<dbReference type="GO" id="GO:0008425">
    <property type="term" value="F:2-methoxy-6-polyprenyl-1,4-benzoquinol methyltransferase activity"/>
    <property type="evidence" value="ECO:0007669"/>
    <property type="project" value="UniProtKB-UniRule"/>
</dbReference>
<dbReference type="GO" id="GO:0043770">
    <property type="term" value="F:demethylmenaquinone methyltransferase activity"/>
    <property type="evidence" value="ECO:0007669"/>
    <property type="project" value="UniProtKB-UniRule"/>
</dbReference>
<dbReference type="GO" id="GO:0009060">
    <property type="term" value="P:aerobic respiration"/>
    <property type="evidence" value="ECO:0007669"/>
    <property type="project" value="UniProtKB-UniRule"/>
</dbReference>
<dbReference type="GO" id="GO:0009234">
    <property type="term" value="P:menaquinone biosynthetic process"/>
    <property type="evidence" value="ECO:0007669"/>
    <property type="project" value="UniProtKB-UniRule"/>
</dbReference>
<dbReference type="GO" id="GO:0032259">
    <property type="term" value="P:methylation"/>
    <property type="evidence" value="ECO:0007669"/>
    <property type="project" value="UniProtKB-KW"/>
</dbReference>
<dbReference type="CDD" id="cd02440">
    <property type="entry name" value="AdoMet_MTases"/>
    <property type="match status" value="1"/>
</dbReference>
<dbReference type="Gene3D" id="3.40.50.150">
    <property type="entry name" value="Vaccinia Virus protein VP39"/>
    <property type="match status" value="1"/>
</dbReference>
<dbReference type="HAMAP" id="MF_01813">
    <property type="entry name" value="MenG_UbiE_methyltr"/>
    <property type="match status" value="1"/>
</dbReference>
<dbReference type="InterPro" id="IPR029063">
    <property type="entry name" value="SAM-dependent_MTases_sf"/>
</dbReference>
<dbReference type="InterPro" id="IPR004033">
    <property type="entry name" value="UbiE/COQ5_MeTrFase"/>
</dbReference>
<dbReference type="InterPro" id="IPR023576">
    <property type="entry name" value="UbiE/COQ5_MeTrFase_CS"/>
</dbReference>
<dbReference type="NCBIfam" id="TIGR01934">
    <property type="entry name" value="MenG_MenH_UbiE"/>
    <property type="match status" value="1"/>
</dbReference>
<dbReference type="NCBIfam" id="NF001242">
    <property type="entry name" value="PRK00216.1-3"/>
    <property type="match status" value="1"/>
</dbReference>
<dbReference type="NCBIfam" id="NF001244">
    <property type="entry name" value="PRK00216.1-5"/>
    <property type="match status" value="1"/>
</dbReference>
<dbReference type="PANTHER" id="PTHR43591:SF24">
    <property type="entry name" value="2-METHOXY-6-POLYPRENYL-1,4-BENZOQUINOL METHYLASE, MITOCHONDRIAL"/>
    <property type="match status" value="1"/>
</dbReference>
<dbReference type="PANTHER" id="PTHR43591">
    <property type="entry name" value="METHYLTRANSFERASE"/>
    <property type="match status" value="1"/>
</dbReference>
<dbReference type="Pfam" id="PF01209">
    <property type="entry name" value="Ubie_methyltran"/>
    <property type="match status" value="1"/>
</dbReference>
<dbReference type="SUPFAM" id="SSF53335">
    <property type="entry name" value="S-adenosyl-L-methionine-dependent methyltransferases"/>
    <property type="match status" value="1"/>
</dbReference>
<dbReference type="PROSITE" id="PS51608">
    <property type="entry name" value="SAM_MT_UBIE"/>
    <property type="match status" value="1"/>
</dbReference>
<dbReference type="PROSITE" id="PS01183">
    <property type="entry name" value="UBIE_1"/>
    <property type="match status" value="1"/>
</dbReference>
<dbReference type="PROSITE" id="PS01184">
    <property type="entry name" value="UBIE_2"/>
    <property type="match status" value="1"/>
</dbReference>
<reference key="1">
    <citation type="journal article" date="2002" name="Nature">
        <title>Comparison of the genomes of two Xanthomonas pathogens with differing host specificities.</title>
        <authorList>
            <person name="da Silva A.C.R."/>
            <person name="Ferro J.A."/>
            <person name="Reinach F.C."/>
            <person name="Farah C.S."/>
            <person name="Furlan L.R."/>
            <person name="Quaggio R.B."/>
            <person name="Monteiro-Vitorello C.B."/>
            <person name="Van Sluys M.A."/>
            <person name="Almeida N.F. Jr."/>
            <person name="Alves L.M.C."/>
            <person name="do Amaral A.M."/>
            <person name="Bertolini M.C."/>
            <person name="Camargo L.E.A."/>
            <person name="Camarotte G."/>
            <person name="Cannavan F."/>
            <person name="Cardozo J."/>
            <person name="Chambergo F."/>
            <person name="Ciapina L.P."/>
            <person name="Cicarelli R.M.B."/>
            <person name="Coutinho L.L."/>
            <person name="Cursino-Santos J.R."/>
            <person name="El-Dorry H."/>
            <person name="Faria J.B."/>
            <person name="Ferreira A.J.S."/>
            <person name="Ferreira R.C.C."/>
            <person name="Ferro M.I.T."/>
            <person name="Formighieri E.F."/>
            <person name="Franco M.C."/>
            <person name="Greggio C.C."/>
            <person name="Gruber A."/>
            <person name="Katsuyama A.M."/>
            <person name="Kishi L.T."/>
            <person name="Leite R.P."/>
            <person name="Lemos E.G.M."/>
            <person name="Lemos M.V.F."/>
            <person name="Locali E.C."/>
            <person name="Machado M.A."/>
            <person name="Madeira A.M.B.N."/>
            <person name="Martinez-Rossi N.M."/>
            <person name="Martins E.C."/>
            <person name="Meidanis J."/>
            <person name="Menck C.F.M."/>
            <person name="Miyaki C.Y."/>
            <person name="Moon D.H."/>
            <person name="Moreira L.M."/>
            <person name="Novo M.T.M."/>
            <person name="Okura V.K."/>
            <person name="Oliveira M.C."/>
            <person name="Oliveira V.R."/>
            <person name="Pereira H.A."/>
            <person name="Rossi A."/>
            <person name="Sena J.A.D."/>
            <person name="Silva C."/>
            <person name="de Souza R.F."/>
            <person name="Spinola L.A.F."/>
            <person name="Takita M.A."/>
            <person name="Tamura R.E."/>
            <person name="Teixeira E.C."/>
            <person name="Tezza R.I.D."/>
            <person name="Trindade dos Santos M."/>
            <person name="Truffi D."/>
            <person name="Tsai S.M."/>
            <person name="White F.F."/>
            <person name="Setubal J.C."/>
            <person name="Kitajima J.P."/>
        </authorList>
    </citation>
    <scope>NUCLEOTIDE SEQUENCE [LARGE SCALE GENOMIC DNA]</scope>
    <source>
        <strain>306</strain>
    </source>
</reference>
<feature type="chain" id="PRO_0000193353" description="Ubiquinone/menaquinone biosynthesis C-methyltransferase UbiE">
    <location>
        <begin position="1"/>
        <end position="253"/>
    </location>
</feature>
<feature type="binding site" evidence="1">
    <location>
        <position position="76"/>
    </location>
    <ligand>
        <name>S-adenosyl-L-methionine</name>
        <dbReference type="ChEBI" id="CHEBI:59789"/>
    </ligand>
</feature>
<feature type="binding site" evidence="1">
    <location>
        <position position="97"/>
    </location>
    <ligand>
        <name>S-adenosyl-L-methionine</name>
        <dbReference type="ChEBI" id="CHEBI:59789"/>
    </ligand>
</feature>
<feature type="binding site" evidence="1">
    <location>
        <begin position="125"/>
        <end position="126"/>
    </location>
    <ligand>
        <name>S-adenosyl-L-methionine</name>
        <dbReference type="ChEBI" id="CHEBI:59789"/>
    </ligand>
</feature>
<feature type="binding site" evidence="1">
    <location>
        <position position="142"/>
    </location>
    <ligand>
        <name>S-adenosyl-L-methionine</name>
        <dbReference type="ChEBI" id="CHEBI:59789"/>
    </ligand>
</feature>
<protein>
    <recommendedName>
        <fullName evidence="1">Ubiquinone/menaquinone biosynthesis C-methyltransferase UbiE</fullName>
        <ecNumber evidence="1">2.1.1.163</ecNumber>
        <ecNumber evidence="1">2.1.1.201</ecNumber>
    </recommendedName>
    <alternativeName>
        <fullName evidence="1">2-methoxy-6-polyprenyl-1,4-benzoquinol methylase</fullName>
    </alternativeName>
    <alternativeName>
        <fullName evidence="1">Demethylmenaquinone methyltransferase</fullName>
    </alternativeName>
</protein>
<gene>
    <name evidence="1" type="primary">ubiE</name>
    <name type="ordered locus">XAC0643</name>
</gene>
<comment type="function">
    <text evidence="1">Methyltransferase required for the conversion of demethylmenaquinol (DMKH2) to menaquinol (MKH2) and the conversion of 2-polyprenyl-6-methoxy-1,4-benzoquinol (DDMQH2) to 2-polyprenyl-3-methyl-6-methoxy-1,4-benzoquinol (DMQH2).</text>
</comment>
<comment type="catalytic activity">
    <reaction evidence="1">
        <text>a 2-demethylmenaquinol + S-adenosyl-L-methionine = a menaquinol + S-adenosyl-L-homocysteine + H(+)</text>
        <dbReference type="Rhea" id="RHEA:42640"/>
        <dbReference type="Rhea" id="RHEA-COMP:9539"/>
        <dbReference type="Rhea" id="RHEA-COMP:9563"/>
        <dbReference type="ChEBI" id="CHEBI:15378"/>
        <dbReference type="ChEBI" id="CHEBI:18151"/>
        <dbReference type="ChEBI" id="CHEBI:55437"/>
        <dbReference type="ChEBI" id="CHEBI:57856"/>
        <dbReference type="ChEBI" id="CHEBI:59789"/>
        <dbReference type="EC" id="2.1.1.163"/>
    </reaction>
</comment>
<comment type="catalytic activity">
    <reaction evidence="1">
        <text>a 2-methoxy-6-(all-trans-polyprenyl)benzene-1,4-diol + S-adenosyl-L-methionine = a 5-methoxy-2-methyl-3-(all-trans-polyprenyl)benzene-1,4-diol + S-adenosyl-L-homocysteine + H(+)</text>
        <dbReference type="Rhea" id="RHEA:28286"/>
        <dbReference type="Rhea" id="RHEA-COMP:10858"/>
        <dbReference type="Rhea" id="RHEA-COMP:10859"/>
        <dbReference type="ChEBI" id="CHEBI:15378"/>
        <dbReference type="ChEBI" id="CHEBI:57856"/>
        <dbReference type="ChEBI" id="CHEBI:59789"/>
        <dbReference type="ChEBI" id="CHEBI:84166"/>
        <dbReference type="ChEBI" id="CHEBI:84167"/>
        <dbReference type="EC" id="2.1.1.201"/>
    </reaction>
</comment>
<comment type="pathway">
    <text evidence="1">Quinol/quinone metabolism; menaquinone biosynthesis; menaquinol from 1,4-dihydroxy-2-naphthoate: step 2/2.</text>
</comment>
<comment type="pathway">
    <text evidence="1">Cofactor biosynthesis; ubiquinone biosynthesis.</text>
</comment>
<comment type="similarity">
    <text evidence="1">Belongs to the class I-like SAM-binding methyltransferase superfamily. MenG/UbiE family.</text>
</comment>
<name>UBIE_XANAC</name>
<sequence>MSESPYTSGTTHFGFRDVAAKDKQKLVGEVFTSVARNYDLMNDLMSLGVHRAWKRYFVATAQVKPGDRVLDLAGGTGDIAVLLKERVGNEGAVVLGDINAGMLSVGRDRLTNRGLVSGFDYVQCNAEALPFPDQSFDLLTISFGLRNVTDKDAALREMYRVLKVGGQARVLEFSEVTADWFKPIYDFHSFKILPRLGQLFARDADSYQYLAESIRKHPPQESLKGMMGEAGFARCHFKNLTGGIVAIHSGYKI</sequence>
<accession>Q8PPP2</accession>